<organismHost>
    <name type="scientific">Ornithodoros</name>
    <name type="common">relapsing fever ticks</name>
    <dbReference type="NCBI Taxonomy" id="6937"/>
</organismHost>
<organismHost>
    <name type="scientific">Phacochoerus aethiopicus</name>
    <name type="common">Warthog</name>
    <dbReference type="NCBI Taxonomy" id="85517"/>
</organismHost>
<organismHost>
    <name type="scientific">Phacochoerus africanus</name>
    <name type="common">Warthog</name>
    <dbReference type="NCBI Taxonomy" id="41426"/>
</organismHost>
<organismHost>
    <name type="scientific">Potamochoerus larvatus</name>
    <name type="common">Bushpig</name>
    <dbReference type="NCBI Taxonomy" id="273792"/>
</organismHost>
<organismHost>
    <name type="scientific">Sus scrofa</name>
    <name type="common">Pig</name>
    <dbReference type="NCBI Taxonomy" id="9823"/>
</organismHost>
<name>P10_ASFK5</name>
<protein>
    <recommendedName>
        <fullName>Structural DNA-binding protein p10</fullName>
        <shortName>p10</shortName>
    </recommendedName>
</protein>
<feature type="initiator methionine" description="Removed" evidence="1">
    <location>
        <position position="1"/>
    </location>
</feature>
<feature type="chain" id="PRO_0000373388" description="Structural DNA-binding protein p10">
    <location>
        <begin position="2"/>
        <end position="77"/>
    </location>
</feature>
<feature type="region of interest" description="Disordered" evidence="3">
    <location>
        <begin position="1"/>
        <end position="38"/>
    </location>
</feature>
<feature type="compositionally biased region" description="Polar residues" evidence="3">
    <location>
        <begin position="1"/>
        <end position="12"/>
    </location>
</feature>
<feature type="compositionally biased region" description="Low complexity" evidence="3">
    <location>
        <begin position="17"/>
        <end position="27"/>
    </location>
</feature>
<dbReference type="EMBL" id="AY261360">
    <property type="status" value="NOT_ANNOTATED_CDS"/>
    <property type="molecule type" value="Genomic_DNA"/>
</dbReference>
<dbReference type="SMR" id="P0C9X7"/>
<dbReference type="Proteomes" id="UP000000861">
    <property type="component" value="Segment"/>
</dbReference>
<dbReference type="GO" id="GO:0044423">
    <property type="term" value="C:virion component"/>
    <property type="evidence" value="ECO:0007669"/>
    <property type="project" value="UniProtKB-KW"/>
</dbReference>
<dbReference type="GO" id="GO:0003677">
    <property type="term" value="F:DNA binding"/>
    <property type="evidence" value="ECO:0007669"/>
    <property type="project" value="UniProtKB-KW"/>
</dbReference>
<accession>P0C9X7</accession>
<organism>
    <name type="scientific">African swine fever virus (isolate Pig/Kenya/KEN-50/1950)</name>
    <name type="common">ASFV</name>
    <dbReference type="NCBI Taxonomy" id="561445"/>
    <lineage>
        <taxon>Viruses</taxon>
        <taxon>Varidnaviria</taxon>
        <taxon>Bamfordvirae</taxon>
        <taxon>Nucleocytoviricota</taxon>
        <taxon>Pokkesviricetes</taxon>
        <taxon>Asfuvirales</taxon>
        <taxon>Asfarviridae</taxon>
        <taxon>Asfivirus</taxon>
        <taxon>African swine fever virus</taxon>
    </lineage>
</organism>
<keyword id="KW-0238">DNA-binding</keyword>
<keyword id="KW-0946">Virion</keyword>
<sequence length="77" mass="8279">MPTKAGTKSTANKKTTKGPSKSGSAKGHTGKTHATALHHGMLYKDMVNIAKSKGIPIYQNGSRLTKSELEKKIKRSK</sequence>
<comment type="function">
    <text evidence="1">May play a role in genome packaging through direct interaction with viral DNA. Binds to ssDNA and dsDNA with the same apparent affinity in vitro (By similarity).</text>
</comment>
<comment type="subcellular location">
    <subcellularLocation>
        <location evidence="2">Virion</location>
    </subcellularLocation>
    <text evidence="2">Found in association with the viral nucleoid.</text>
</comment>
<comment type="induction">
    <text evidence="4">Expressed in the early phase of the viral replicative cycle.</text>
</comment>
<comment type="similarity">
    <text evidence="4">Belongs to the asfivirus P10 family.</text>
</comment>
<reference key="1">
    <citation type="submission" date="2003-03" db="EMBL/GenBank/DDBJ databases">
        <title>African swine fever virus genomes.</title>
        <authorList>
            <person name="Kutish G.F."/>
            <person name="Rock D.L."/>
        </authorList>
    </citation>
    <scope>NUCLEOTIDE SEQUENCE [LARGE SCALE GENOMIC DNA]</scope>
</reference>
<evidence type="ECO:0000250" key="1"/>
<evidence type="ECO:0000250" key="2">
    <source>
        <dbReference type="UniProtKB" id="Q89769"/>
    </source>
</evidence>
<evidence type="ECO:0000256" key="3">
    <source>
        <dbReference type="SAM" id="MobiDB-lite"/>
    </source>
</evidence>
<evidence type="ECO:0000305" key="4"/>
<gene>
    <name type="ordered locus">Ken-061</name>
</gene>
<proteinExistence type="inferred from homology"/>